<protein>
    <recommendedName>
        <fullName evidence="1">ATP synthase subunit beta</fullName>
        <ecNumber evidence="1">7.1.2.2</ecNumber>
    </recommendedName>
    <alternativeName>
        <fullName evidence="1">ATP synthase F1 sector subunit beta</fullName>
    </alternativeName>
    <alternativeName>
        <fullName evidence="1">F-ATPase subunit beta</fullName>
    </alternativeName>
</protein>
<organism>
    <name type="scientific">Clostridium novyi (strain NT)</name>
    <dbReference type="NCBI Taxonomy" id="386415"/>
    <lineage>
        <taxon>Bacteria</taxon>
        <taxon>Bacillati</taxon>
        <taxon>Bacillota</taxon>
        <taxon>Clostridia</taxon>
        <taxon>Eubacteriales</taxon>
        <taxon>Clostridiaceae</taxon>
        <taxon>Clostridium</taxon>
    </lineage>
</organism>
<gene>
    <name evidence="1" type="primary">atpD</name>
    <name type="ordered locus">NT01CX_0530</name>
</gene>
<feature type="chain" id="PRO_1000073364" description="ATP synthase subunit beta">
    <location>
        <begin position="1"/>
        <end position="464"/>
    </location>
</feature>
<feature type="binding site" evidence="1">
    <location>
        <begin position="153"/>
        <end position="160"/>
    </location>
    <ligand>
        <name>ATP</name>
        <dbReference type="ChEBI" id="CHEBI:30616"/>
    </ligand>
</feature>
<proteinExistence type="inferred from homology"/>
<keyword id="KW-0066">ATP synthesis</keyword>
<keyword id="KW-0067">ATP-binding</keyword>
<keyword id="KW-1003">Cell membrane</keyword>
<keyword id="KW-0139">CF(1)</keyword>
<keyword id="KW-0375">Hydrogen ion transport</keyword>
<keyword id="KW-0406">Ion transport</keyword>
<keyword id="KW-0472">Membrane</keyword>
<keyword id="KW-0547">Nucleotide-binding</keyword>
<keyword id="KW-1185">Reference proteome</keyword>
<keyword id="KW-1278">Translocase</keyword>
<keyword id="KW-0813">Transport</keyword>
<name>ATPB_CLONN</name>
<dbReference type="EC" id="7.1.2.2" evidence="1"/>
<dbReference type="EMBL" id="CP000382">
    <property type="protein sequence ID" value="ABK62503.1"/>
    <property type="molecule type" value="Genomic_DNA"/>
</dbReference>
<dbReference type="RefSeq" id="WP_011722976.1">
    <property type="nucleotide sequence ID" value="NC_008593.1"/>
</dbReference>
<dbReference type="SMR" id="A0Q2Z4"/>
<dbReference type="STRING" id="386415.NT01CX_0530"/>
<dbReference type="KEGG" id="cno:NT01CX_0530"/>
<dbReference type="eggNOG" id="COG0055">
    <property type="taxonomic scope" value="Bacteria"/>
</dbReference>
<dbReference type="HOGENOM" id="CLU_022398_0_2_9"/>
<dbReference type="Proteomes" id="UP000008220">
    <property type="component" value="Chromosome"/>
</dbReference>
<dbReference type="GO" id="GO:0005886">
    <property type="term" value="C:plasma membrane"/>
    <property type="evidence" value="ECO:0007669"/>
    <property type="project" value="UniProtKB-SubCell"/>
</dbReference>
<dbReference type="GO" id="GO:0045259">
    <property type="term" value="C:proton-transporting ATP synthase complex"/>
    <property type="evidence" value="ECO:0007669"/>
    <property type="project" value="UniProtKB-KW"/>
</dbReference>
<dbReference type="GO" id="GO:0005524">
    <property type="term" value="F:ATP binding"/>
    <property type="evidence" value="ECO:0007669"/>
    <property type="project" value="UniProtKB-UniRule"/>
</dbReference>
<dbReference type="GO" id="GO:0016887">
    <property type="term" value="F:ATP hydrolysis activity"/>
    <property type="evidence" value="ECO:0007669"/>
    <property type="project" value="InterPro"/>
</dbReference>
<dbReference type="GO" id="GO:0046933">
    <property type="term" value="F:proton-transporting ATP synthase activity, rotational mechanism"/>
    <property type="evidence" value="ECO:0007669"/>
    <property type="project" value="UniProtKB-UniRule"/>
</dbReference>
<dbReference type="CDD" id="cd18110">
    <property type="entry name" value="ATP-synt_F1_beta_C"/>
    <property type="match status" value="1"/>
</dbReference>
<dbReference type="CDD" id="cd18115">
    <property type="entry name" value="ATP-synt_F1_beta_N"/>
    <property type="match status" value="1"/>
</dbReference>
<dbReference type="CDD" id="cd01133">
    <property type="entry name" value="F1-ATPase_beta_CD"/>
    <property type="match status" value="1"/>
</dbReference>
<dbReference type="FunFam" id="1.10.1140.10:FF:000001">
    <property type="entry name" value="ATP synthase subunit beta"/>
    <property type="match status" value="1"/>
</dbReference>
<dbReference type="FunFam" id="3.40.50.300:FF:000026">
    <property type="entry name" value="ATP synthase subunit beta"/>
    <property type="match status" value="1"/>
</dbReference>
<dbReference type="Gene3D" id="2.40.10.170">
    <property type="match status" value="1"/>
</dbReference>
<dbReference type="Gene3D" id="1.10.1140.10">
    <property type="entry name" value="Bovine Mitochondrial F1-atpase, Atp Synthase Beta Chain, Chain D, domain 3"/>
    <property type="match status" value="1"/>
</dbReference>
<dbReference type="Gene3D" id="3.40.50.300">
    <property type="entry name" value="P-loop containing nucleotide triphosphate hydrolases"/>
    <property type="match status" value="1"/>
</dbReference>
<dbReference type="HAMAP" id="MF_01347">
    <property type="entry name" value="ATP_synth_beta_bact"/>
    <property type="match status" value="1"/>
</dbReference>
<dbReference type="InterPro" id="IPR003593">
    <property type="entry name" value="AAA+_ATPase"/>
</dbReference>
<dbReference type="InterPro" id="IPR055190">
    <property type="entry name" value="ATP-synt_VA_C"/>
</dbReference>
<dbReference type="InterPro" id="IPR005722">
    <property type="entry name" value="ATP_synth_F1_bsu"/>
</dbReference>
<dbReference type="InterPro" id="IPR020003">
    <property type="entry name" value="ATPase_a/bsu_AS"/>
</dbReference>
<dbReference type="InterPro" id="IPR050053">
    <property type="entry name" value="ATPase_alpha/beta_chains"/>
</dbReference>
<dbReference type="InterPro" id="IPR004100">
    <property type="entry name" value="ATPase_F1/V1/A1_a/bsu_N"/>
</dbReference>
<dbReference type="InterPro" id="IPR036121">
    <property type="entry name" value="ATPase_F1/V1/A1_a/bsu_N_sf"/>
</dbReference>
<dbReference type="InterPro" id="IPR000194">
    <property type="entry name" value="ATPase_F1/V1/A1_a/bsu_nucl-bd"/>
</dbReference>
<dbReference type="InterPro" id="IPR024034">
    <property type="entry name" value="ATPase_F1/V1_b/a_C"/>
</dbReference>
<dbReference type="InterPro" id="IPR027417">
    <property type="entry name" value="P-loop_NTPase"/>
</dbReference>
<dbReference type="NCBIfam" id="TIGR01039">
    <property type="entry name" value="atpD"/>
    <property type="match status" value="1"/>
</dbReference>
<dbReference type="PANTHER" id="PTHR15184">
    <property type="entry name" value="ATP SYNTHASE"/>
    <property type="match status" value="1"/>
</dbReference>
<dbReference type="PANTHER" id="PTHR15184:SF71">
    <property type="entry name" value="ATP SYNTHASE SUBUNIT BETA, MITOCHONDRIAL"/>
    <property type="match status" value="1"/>
</dbReference>
<dbReference type="Pfam" id="PF00006">
    <property type="entry name" value="ATP-synt_ab"/>
    <property type="match status" value="1"/>
</dbReference>
<dbReference type="Pfam" id="PF02874">
    <property type="entry name" value="ATP-synt_ab_N"/>
    <property type="match status" value="1"/>
</dbReference>
<dbReference type="Pfam" id="PF22919">
    <property type="entry name" value="ATP-synt_VA_C"/>
    <property type="match status" value="1"/>
</dbReference>
<dbReference type="SMART" id="SM00382">
    <property type="entry name" value="AAA"/>
    <property type="match status" value="1"/>
</dbReference>
<dbReference type="SUPFAM" id="SSF47917">
    <property type="entry name" value="C-terminal domain of alpha and beta subunits of F1 ATP synthase"/>
    <property type="match status" value="1"/>
</dbReference>
<dbReference type="SUPFAM" id="SSF50615">
    <property type="entry name" value="N-terminal domain of alpha and beta subunits of F1 ATP synthase"/>
    <property type="match status" value="1"/>
</dbReference>
<dbReference type="SUPFAM" id="SSF52540">
    <property type="entry name" value="P-loop containing nucleoside triphosphate hydrolases"/>
    <property type="match status" value="1"/>
</dbReference>
<dbReference type="PROSITE" id="PS00152">
    <property type="entry name" value="ATPASE_ALPHA_BETA"/>
    <property type="match status" value="1"/>
</dbReference>
<evidence type="ECO:0000255" key="1">
    <source>
        <dbReference type="HAMAP-Rule" id="MF_01347"/>
    </source>
</evidence>
<reference key="1">
    <citation type="journal article" date="2006" name="Nat. Biotechnol.">
        <title>The genome and transcriptomes of the anti-tumor agent Clostridium novyi-NT.</title>
        <authorList>
            <person name="Bettegowda C."/>
            <person name="Huang X."/>
            <person name="Lin J."/>
            <person name="Cheong I."/>
            <person name="Kohli M."/>
            <person name="Szabo S.A."/>
            <person name="Zhang X."/>
            <person name="Diaz L.A. Jr."/>
            <person name="Velculescu V.E."/>
            <person name="Parmigiani G."/>
            <person name="Kinzler K.W."/>
            <person name="Vogelstein B."/>
            <person name="Zhou S."/>
        </authorList>
    </citation>
    <scope>NUCLEOTIDE SEQUENCE [LARGE SCALE GENOMIC DNA]</scope>
    <source>
        <strain>NT</strain>
    </source>
</reference>
<sequence length="464" mass="50998">MPDNNVGRVVQVIGPVIDIKFDSDCLPNIYNAIEIDMGDRILITEVEQHIGDDVVRTIAMESTEGLKRGMKAVNTEKPISVPVGSEILGRLFNVLGKTIDEEGEFKAEEYYPIHRPAPTFEEQSVEPEMFETGIKVIDLIAPYQKGGKIGLFGGAGVGKTVLIQELINNIAKEHGGLSVFTGVGERTREGNDLYYEMKESGVINKTALVFGQMNEPPGARMRVALTGLTMAEYFRDQGQNVLLFIDNIFRFTQAGSEVSALLGRIPSAVGYQPTLATEMGALQERITSTKHGSITSVQAVYVPADDLTDPAPATTFAHLDATTVLSRSIAELGIYPAVDPLESTSRILDPRVIGQEHYDVAINVKHILERYKELQDIIAILGVDELSEEDKLVVSRARKVQRFLSQPFTVAEQFTGMKGKFVPVKETVRGFKEIIEGKYDDVPEAAFLFVGSIEEALEKAKTMS</sequence>
<accession>A0Q2Z4</accession>
<comment type="function">
    <text evidence="1">Produces ATP from ADP in the presence of a proton gradient across the membrane. The catalytic sites are hosted primarily by the beta subunits.</text>
</comment>
<comment type="catalytic activity">
    <reaction evidence="1">
        <text>ATP + H2O + 4 H(+)(in) = ADP + phosphate + 5 H(+)(out)</text>
        <dbReference type="Rhea" id="RHEA:57720"/>
        <dbReference type="ChEBI" id="CHEBI:15377"/>
        <dbReference type="ChEBI" id="CHEBI:15378"/>
        <dbReference type="ChEBI" id="CHEBI:30616"/>
        <dbReference type="ChEBI" id="CHEBI:43474"/>
        <dbReference type="ChEBI" id="CHEBI:456216"/>
        <dbReference type="EC" id="7.1.2.2"/>
    </reaction>
</comment>
<comment type="subunit">
    <text evidence="1">F-type ATPases have 2 components, CF(1) - the catalytic core - and CF(0) - the membrane proton channel. CF(1) has five subunits: alpha(3), beta(3), gamma(1), delta(1), epsilon(1). CF(0) has three main subunits: a(1), b(2) and c(9-12). The alpha and beta chains form an alternating ring which encloses part of the gamma chain. CF(1) is attached to CF(0) by a central stalk formed by the gamma and epsilon chains, while a peripheral stalk is formed by the delta and b chains.</text>
</comment>
<comment type="subcellular location">
    <subcellularLocation>
        <location evidence="1">Cell membrane</location>
        <topology evidence="1">Peripheral membrane protein</topology>
    </subcellularLocation>
</comment>
<comment type="similarity">
    <text evidence="1">Belongs to the ATPase alpha/beta chains family.</text>
</comment>